<keyword id="KW-0002">3D-structure</keyword>
<keyword id="KW-0963">Cytoplasm</keyword>
<keyword id="KW-0238">DNA-binding</keyword>
<keyword id="KW-0342">GTP-binding</keyword>
<keyword id="KW-0547">Nucleotide-binding</keyword>
<keyword id="KW-0678">Repressor</keyword>
<keyword id="KW-0804">Transcription</keyword>
<keyword id="KW-0805">Transcription regulation</keyword>
<evidence type="ECO:0000255" key="1">
    <source>
        <dbReference type="HAMAP-Rule" id="MF_00621"/>
    </source>
</evidence>
<evidence type="ECO:0000269" key="2">
    <source>
    </source>
</evidence>
<evidence type="ECO:0000303" key="3">
    <source>
    </source>
</evidence>
<evidence type="ECO:0000305" key="4"/>
<evidence type="ECO:0007744" key="5">
    <source>
        <dbReference type="PDB" id="5EY0"/>
    </source>
</evidence>
<evidence type="ECO:0007744" key="6">
    <source>
        <dbReference type="PDB" id="5EY1"/>
    </source>
</evidence>
<evidence type="ECO:0007829" key="7">
    <source>
        <dbReference type="PDB" id="5EY0"/>
    </source>
</evidence>
<organism>
    <name type="scientific">Staphylococcus aureus (strain Mu3 / ATCC 700698)</name>
    <dbReference type="NCBI Taxonomy" id="418127"/>
    <lineage>
        <taxon>Bacteria</taxon>
        <taxon>Bacillati</taxon>
        <taxon>Bacillota</taxon>
        <taxon>Bacilli</taxon>
        <taxon>Bacillales</taxon>
        <taxon>Staphylococcaceae</taxon>
        <taxon>Staphylococcus</taxon>
    </lineage>
</organism>
<reference key="1">
    <citation type="journal article" date="2008" name="Antimicrob. Agents Chemother.">
        <title>Mutated response regulator graR is responsible for phenotypic conversion of Staphylococcus aureus from heterogeneous vancomycin-intermediate resistance to vancomycin-intermediate resistance.</title>
        <authorList>
            <person name="Neoh H.-M."/>
            <person name="Cui L."/>
            <person name="Yuzawa H."/>
            <person name="Takeuchi F."/>
            <person name="Matsuo M."/>
            <person name="Hiramatsu K."/>
        </authorList>
    </citation>
    <scope>NUCLEOTIDE SEQUENCE [LARGE SCALE GENOMIC DNA]</scope>
    <source>
        <strain>Mu3 / ATCC 700698</strain>
    </source>
</reference>
<reference evidence="5 6" key="2">
    <citation type="journal article" date="2016" name="Nucleic Acids Res.">
        <title>The structure of the pleiotropic transcription regulator CodY provides insight into its GTP-sensing mechanism.</title>
        <authorList>
            <person name="Han A.R."/>
            <person name="Kang H.R."/>
            <person name="Son J."/>
            <person name="Kwon D.H."/>
            <person name="Kim S."/>
            <person name="Lee W.C."/>
            <person name="Song H.K."/>
            <person name="Song M.J."/>
            <person name="Hwang K.Y."/>
        </authorList>
    </citation>
    <scope>X-RAY CRYSTALLOGRAPHY (1.60 ANGSTROMS) IN COMPLEXES WITH GTP AND L-ISOLEUCINE</scope>
    <scope>ACTIVITY REGULATION</scope>
    <scope>SUBUNIT</scope>
    <scope>DOMAIN</scope>
    <scope>MUTAGENESIS OF GLU-153</scope>
    <source>
        <strain>Mu3 / ATCC 700698</strain>
    </source>
</reference>
<gene>
    <name evidence="1 3" type="primary">codY</name>
    <name type="ordered locus">SAHV_1245</name>
</gene>
<name>CODY_STAA1</name>
<dbReference type="EMBL" id="AP009324">
    <property type="protein sequence ID" value="BAF78128.1"/>
    <property type="molecule type" value="Genomic_DNA"/>
</dbReference>
<dbReference type="RefSeq" id="WP_000055337.1">
    <property type="nucleotide sequence ID" value="NZ_CTYB01000004.1"/>
</dbReference>
<dbReference type="PDB" id="5EY0">
    <property type="method" value="X-ray"/>
    <property type="resolution" value="1.60 A"/>
    <property type="chains" value="A/B=1-257"/>
</dbReference>
<dbReference type="PDB" id="5EY1">
    <property type="method" value="X-ray"/>
    <property type="resolution" value="2.00 A"/>
    <property type="chains" value="A/B=1-257"/>
</dbReference>
<dbReference type="PDBsum" id="5EY0"/>
<dbReference type="PDBsum" id="5EY1"/>
<dbReference type="SMR" id="A7X1N2"/>
<dbReference type="KEGG" id="saw:SAHV_1245"/>
<dbReference type="HOGENOM" id="CLU_089581_0_0_9"/>
<dbReference type="GO" id="GO:0005737">
    <property type="term" value="C:cytoplasm"/>
    <property type="evidence" value="ECO:0007669"/>
    <property type="project" value="UniProtKB-SubCell"/>
</dbReference>
<dbReference type="GO" id="GO:0003677">
    <property type="term" value="F:DNA binding"/>
    <property type="evidence" value="ECO:0007669"/>
    <property type="project" value="UniProtKB-UniRule"/>
</dbReference>
<dbReference type="GO" id="GO:0003700">
    <property type="term" value="F:DNA-binding transcription factor activity"/>
    <property type="evidence" value="ECO:0007669"/>
    <property type="project" value="InterPro"/>
</dbReference>
<dbReference type="GO" id="GO:0005525">
    <property type="term" value="F:GTP binding"/>
    <property type="evidence" value="ECO:0007669"/>
    <property type="project" value="UniProtKB-KW"/>
</dbReference>
<dbReference type="GO" id="GO:0045892">
    <property type="term" value="P:negative regulation of DNA-templated transcription"/>
    <property type="evidence" value="ECO:0007669"/>
    <property type="project" value="UniProtKB-UniRule"/>
</dbReference>
<dbReference type="FunFam" id="1.10.10.10:FF:000034">
    <property type="entry name" value="GTP-sensing transcriptional pleiotropic repressor CodY"/>
    <property type="match status" value="1"/>
</dbReference>
<dbReference type="FunFam" id="3.30.450.40:FF:000003">
    <property type="entry name" value="GTP-sensing transcriptional pleiotropic repressor CodY"/>
    <property type="match status" value="1"/>
</dbReference>
<dbReference type="Gene3D" id="3.30.450.40">
    <property type="match status" value="1"/>
</dbReference>
<dbReference type="Gene3D" id="1.10.10.10">
    <property type="entry name" value="Winged helix-like DNA-binding domain superfamily/Winged helix DNA-binding domain"/>
    <property type="match status" value="1"/>
</dbReference>
<dbReference type="HAMAP" id="MF_00621">
    <property type="entry name" value="HTH_type_CodY"/>
    <property type="match status" value="1"/>
</dbReference>
<dbReference type="InterPro" id="IPR014154">
    <property type="entry name" value="CodY"/>
</dbReference>
<dbReference type="InterPro" id="IPR029016">
    <property type="entry name" value="GAF-like_dom_sf"/>
</dbReference>
<dbReference type="InterPro" id="IPR013198">
    <property type="entry name" value="GTP_trans_reg_CodY_C"/>
</dbReference>
<dbReference type="InterPro" id="IPR010312">
    <property type="entry name" value="Transc_reg_CodY_N"/>
</dbReference>
<dbReference type="InterPro" id="IPR036388">
    <property type="entry name" value="WH-like_DNA-bd_sf"/>
</dbReference>
<dbReference type="InterPro" id="IPR036390">
    <property type="entry name" value="WH_DNA-bd_sf"/>
</dbReference>
<dbReference type="NCBIfam" id="TIGR02787">
    <property type="entry name" value="codY_Gpos"/>
    <property type="match status" value="1"/>
</dbReference>
<dbReference type="NCBIfam" id="NF003170">
    <property type="entry name" value="PRK04158.1"/>
    <property type="match status" value="1"/>
</dbReference>
<dbReference type="PANTHER" id="PTHR40062:SF1">
    <property type="entry name" value="GLOBAL TRANSCRIPTIONAL REGULATOR CODY"/>
    <property type="match status" value="1"/>
</dbReference>
<dbReference type="PANTHER" id="PTHR40062">
    <property type="entry name" value="GTP-SENSING TRANSCRIPTIONAL PLEIOTROPIC REPRESSOR CODY"/>
    <property type="match status" value="1"/>
</dbReference>
<dbReference type="Pfam" id="PF06018">
    <property type="entry name" value="CodY"/>
    <property type="match status" value="1"/>
</dbReference>
<dbReference type="Pfam" id="PF08222">
    <property type="entry name" value="HTH_CodY"/>
    <property type="match status" value="1"/>
</dbReference>
<dbReference type="PIRSF" id="PIRSF011572">
    <property type="entry name" value="GTP_sensing_CodY"/>
    <property type="match status" value="1"/>
</dbReference>
<dbReference type="SUPFAM" id="SSF46785">
    <property type="entry name" value="Winged helix' DNA-binding domain"/>
    <property type="match status" value="1"/>
</dbReference>
<proteinExistence type="evidence at protein level"/>
<comment type="function">
    <text evidence="1">DNA-binding global transcriptional regulator which is involved in the adaptive response to starvation and acts by directly or indirectly controlling the expression of numerous genes in response to nutrient availability. During rapid exponential growth, CodY is highly active and represses genes whose products allow adaptation to nutrient depletion.</text>
</comment>
<comment type="activity regulation">
    <text evidence="2">Activity of CodY is modulated by interaction with two types of effectors: the branched-chain amino acids (BCAAs) leucine, isoleucine and valine, which are signals of the nutritional status of the cell, and GTP, which may signal the energetic status of the cell.</text>
</comment>
<comment type="subunit">
    <text evidence="2">Homodimer (PubMed:27596595). Homotetramer (PubMed:27596595). May form homodimers under conditions in which energy sources are sufficient (active state) and homotetramers under insufficient nutrient conditions (inactive state) (PubMed:27596595).</text>
</comment>
<comment type="subcellular location">
    <subcellularLocation>
        <location evidence="1">Cytoplasm</location>
    </subcellularLocation>
</comment>
<comment type="domain">
    <text evidence="2">Modular protein made up of an N-terminal effector binding GAF-type domain and a C-terminal wHTH DNA binding domain, separated by a helical linker.</text>
</comment>
<comment type="similarity">
    <text evidence="1">Belongs to the CodY family.</text>
</comment>
<protein>
    <recommendedName>
        <fullName evidence="1 4">Global transcriptional regulator CodY</fullName>
    </recommendedName>
</protein>
<feature type="chain" id="PRO_1000051541" description="Global transcriptional regulator CodY">
    <location>
        <begin position="1"/>
        <end position="257"/>
    </location>
</feature>
<feature type="DNA-binding region" description="H-T-H motif" evidence="1">
    <location>
        <begin position="203"/>
        <end position="222"/>
    </location>
</feature>
<feature type="region of interest" description="GAF domain" evidence="1">
    <location>
        <begin position="1"/>
        <end position="155"/>
    </location>
</feature>
<feature type="binding site" evidence="2 5 6">
    <location>
        <position position="22"/>
    </location>
    <ligand>
        <name>GTP</name>
        <dbReference type="ChEBI" id="CHEBI:37565"/>
        <note>activator</note>
    </ligand>
</feature>
<feature type="binding site" evidence="2 5 6">
    <location>
        <position position="24"/>
    </location>
    <ligand>
        <name>GTP</name>
        <dbReference type="ChEBI" id="CHEBI:37565"/>
        <note>activator</note>
    </ligand>
</feature>
<feature type="binding site" evidence="2 5 6">
    <location>
        <position position="43"/>
    </location>
    <ligand>
        <name>GTP</name>
        <dbReference type="ChEBI" id="CHEBI:37565"/>
        <note>activator</note>
    </ligand>
</feature>
<feature type="binding site" evidence="2 5 6">
    <location>
        <position position="44"/>
    </location>
    <ligand>
        <name>GTP</name>
        <dbReference type="ChEBI" id="CHEBI:37565"/>
        <note>activator</note>
    </ligand>
</feature>
<feature type="binding site" evidence="2 5 6">
    <location>
        <position position="45"/>
    </location>
    <ligand>
        <name>GTP</name>
        <dbReference type="ChEBI" id="CHEBI:37565"/>
        <note>activator</note>
    </ligand>
</feature>
<feature type="binding site" evidence="2 5 6">
    <location>
        <position position="47"/>
    </location>
    <ligand>
        <name>GTP</name>
        <dbReference type="ChEBI" id="CHEBI:37565"/>
        <note>activator</note>
    </ligand>
</feature>
<feature type="binding site" evidence="2 5 6">
    <location>
        <position position="61"/>
    </location>
    <ligand>
        <name>L-isoleucine</name>
        <dbReference type="ChEBI" id="CHEBI:58045"/>
        <note>activator</note>
    </ligand>
</feature>
<feature type="binding site" evidence="2 5 6">
    <location>
        <position position="96"/>
    </location>
    <ligand>
        <name>L-isoleucine</name>
        <dbReference type="ChEBI" id="CHEBI:58045"/>
        <note>activator</note>
    </ligand>
</feature>
<feature type="binding site" evidence="2 5 6">
    <location>
        <position position="98"/>
    </location>
    <ligand>
        <name>L-isoleucine</name>
        <dbReference type="ChEBI" id="CHEBI:58045"/>
        <note>activator</note>
    </ligand>
</feature>
<feature type="binding site" evidence="2 5 6">
    <location>
        <position position="153"/>
    </location>
    <ligand>
        <name>GTP</name>
        <dbReference type="ChEBI" id="CHEBI:37565"/>
        <note>activator</note>
    </ligand>
</feature>
<feature type="binding site" evidence="2 5 6">
    <location>
        <position position="158"/>
    </location>
    <ligand>
        <name>GTP</name>
        <dbReference type="ChEBI" id="CHEBI:37565"/>
        <note>activator</note>
    </ligand>
</feature>
<feature type="mutagenesis site" description="Decreases GTP-binding affinity." evidence="2">
    <original>E</original>
    <variation>A</variation>
    <location>
        <position position="153"/>
    </location>
</feature>
<feature type="helix" evidence="7">
    <location>
        <begin position="3"/>
        <end position="16"/>
    </location>
</feature>
<feature type="strand" evidence="7">
    <location>
        <begin position="18"/>
        <end position="21"/>
    </location>
</feature>
<feature type="helix" evidence="7">
    <location>
        <begin position="24"/>
        <end position="35"/>
    </location>
</feature>
<feature type="strand" evidence="7">
    <location>
        <begin position="38"/>
        <end position="43"/>
    </location>
</feature>
<feature type="strand" evidence="7">
    <location>
        <begin position="47"/>
        <end position="52"/>
    </location>
</feature>
<feature type="helix" evidence="7">
    <location>
        <begin position="55"/>
        <end position="58"/>
    </location>
</feature>
<feature type="helix" evidence="7">
    <location>
        <begin position="60"/>
        <end position="68"/>
    </location>
</feature>
<feature type="helix" evidence="7">
    <location>
        <begin position="73"/>
        <end position="80"/>
    </location>
</feature>
<feature type="strand" evidence="7">
    <location>
        <begin position="86"/>
        <end position="89"/>
    </location>
</feature>
<feature type="helix" evidence="7">
    <location>
        <begin position="100"/>
        <end position="106"/>
    </location>
</feature>
<feature type="strand" evidence="7">
    <location>
        <begin position="110"/>
        <end position="118"/>
    </location>
</feature>
<feature type="strand" evidence="7">
    <location>
        <begin position="121"/>
        <end position="132"/>
    </location>
</feature>
<feature type="helix" evidence="7">
    <location>
        <begin position="137"/>
        <end position="178"/>
    </location>
</feature>
<feature type="helix" evidence="7">
    <location>
        <begin position="181"/>
        <end position="192"/>
    </location>
</feature>
<feature type="turn" evidence="7">
    <location>
        <begin position="193"/>
        <end position="195"/>
    </location>
</feature>
<feature type="strand" evidence="7">
    <location>
        <begin position="196"/>
        <end position="201"/>
    </location>
</feature>
<feature type="helix" evidence="7">
    <location>
        <begin position="203"/>
        <end position="210"/>
    </location>
</feature>
<feature type="helix" evidence="7">
    <location>
        <begin position="214"/>
        <end position="227"/>
    </location>
</feature>
<feature type="strand" evidence="7">
    <location>
        <begin position="229"/>
        <end position="233"/>
    </location>
</feature>
<feature type="strand" evidence="7">
    <location>
        <begin position="240"/>
        <end position="245"/>
    </location>
</feature>
<feature type="helix" evidence="7">
    <location>
        <begin position="249"/>
        <end position="254"/>
    </location>
</feature>
<accession>A7X1N2</accession>
<sequence>MSLLSKTRELNTLLQKHKGIAVDFKDVAQTISSVTVTNVFIVSRRGKILGSSLNELLKSQRIIQMLEERHIPSEYTERLMEVKQTESNIDIDNVLTVFPPENRELFIDSRTTIFPILGGGERLGTLVLGRVHDDFNENDLVLGEYAATVIGMEILREKHSEVEKEARDKAAITMAINSLSYSEKEAIEHIFEELGGTEGLLIASKVADRVGITRSVIVNALRKLESAGVIESRSLGMKGTFIKVKKEKFLDELEKSK</sequence>